<comment type="function">
    <text>Tubulin is the major constituent of microtubules, a cylinder consisting of laterally associated linear protofilaments composed of alpha- and beta-tubulin heterodimers. Microtubules grow by the addition of GTP-tubulin dimers to the microtubule end, where a stabilizing cap forms. Below the cap, tubulin dimers are in GDP-bound state, owing to GTPase activity of alpha-tubulin.</text>
</comment>
<comment type="catalytic activity">
    <reaction evidence="2">
        <text>GTP + H2O = GDP + phosphate + H(+)</text>
        <dbReference type="Rhea" id="RHEA:19669"/>
        <dbReference type="ChEBI" id="CHEBI:15377"/>
        <dbReference type="ChEBI" id="CHEBI:15378"/>
        <dbReference type="ChEBI" id="CHEBI:37565"/>
        <dbReference type="ChEBI" id="CHEBI:43474"/>
        <dbReference type="ChEBI" id="CHEBI:58189"/>
    </reaction>
    <physiologicalReaction direction="left-to-right" evidence="2">
        <dbReference type="Rhea" id="RHEA:19670"/>
    </physiologicalReaction>
</comment>
<comment type="cofactor">
    <cofactor evidence="2">
        <name>Mg(2+)</name>
        <dbReference type="ChEBI" id="CHEBI:18420"/>
    </cofactor>
</comment>
<comment type="subunit">
    <text>Dimer of alpha and beta chains. A typical microtubule is a hollow water-filled tube with an outer diameter of 25 nm and an inner diameter of 15 nM. Alpha-beta heterodimers associate head-to-tail to form protofilaments running lengthwise along the microtubule wall with the beta-tubulin subunit facing the microtubule plus end conferring a structural polarity. Microtubules usually have 13 protofilaments but different protofilament numbers can be found in some organisms and specialized cells.</text>
</comment>
<comment type="subcellular location">
    <subcellularLocation>
        <location>Cytoplasm</location>
        <location>Cytoskeleton</location>
    </subcellularLocation>
</comment>
<comment type="developmental stage">
    <text>This protein is specifically expressed in the embryo, being more abundant in the early cleavage stages.</text>
</comment>
<comment type="PTM">
    <text evidence="1">Undergoes a tyrosination/detyrosination cycle, the cyclic removal and re-addition of a C-terminal tyrosine residue by the enzymes tubulin tyrosine carboxypeptidase (TTCP) and tubulin tyrosine ligase (TTL), respectively.</text>
</comment>
<comment type="PTM">
    <text evidence="1">Acetylation of alpha chains at Lys-40 stabilizes microtubules and affects affinity and processivity of microtubule motors. This modification has a role in multiple cellular functions, ranging from cell motility, cell cycle progression or cell differentiation to intracellular trafficking and signaling (By similarity).</text>
</comment>
<comment type="similarity">
    <text evidence="4">Belongs to the tubulin family.</text>
</comment>
<protein>
    <recommendedName>
        <fullName>Tubulin alpha-1 chain</fullName>
        <ecNumber evidence="2">3.6.5.-</ecNumber>
    </recommendedName>
</protein>
<keyword id="KW-0007">Acetylation</keyword>
<keyword id="KW-0963">Cytoplasm</keyword>
<keyword id="KW-0206">Cytoskeleton</keyword>
<keyword id="KW-0342">GTP-binding</keyword>
<keyword id="KW-0378">Hydrolase</keyword>
<keyword id="KW-0460">Magnesium</keyword>
<keyword id="KW-0479">Metal-binding</keyword>
<keyword id="KW-0493">Microtubule</keyword>
<keyword id="KW-0547">Nucleotide-binding</keyword>
<evidence type="ECO:0000250" key="1"/>
<evidence type="ECO:0000250" key="2">
    <source>
        <dbReference type="UniProtKB" id="P68363"/>
    </source>
</evidence>
<evidence type="ECO:0000256" key="3">
    <source>
        <dbReference type="SAM" id="MobiDB-lite"/>
    </source>
</evidence>
<evidence type="ECO:0000305" key="4"/>
<dbReference type="EC" id="3.6.5.-" evidence="2"/>
<dbReference type="EMBL" id="X53618">
    <property type="protein sequence ID" value="CAA37680.1"/>
    <property type="molecule type" value="mRNA"/>
</dbReference>
<dbReference type="PIR" id="A60671">
    <property type="entry name" value="A60671"/>
</dbReference>
<dbReference type="PIR" id="S11207">
    <property type="entry name" value="S11207"/>
</dbReference>
<dbReference type="SMR" id="P18258"/>
<dbReference type="GO" id="GO:0005737">
    <property type="term" value="C:cytoplasm"/>
    <property type="evidence" value="ECO:0007669"/>
    <property type="project" value="UniProtKB-KW"/>
</dbReference>
<dbReference type="GO" id="GO:0005874">
    <property type="term" value="C:microtubule"/>
    <property type="evidence" value="ECO:0007669"/>
    <property type="project" value="UniProtKB-KW"/>
</dbReference>
<dbReference type="GO" id="GO:0005525">
    <property type="term" value="F:GTP binding"/>
    <property type="evidence" value="ECO:0007669"/>
    <property type="project" value="UniProtKB-KW"/>
</dbReference>
<dbReference type="GO" id="GO:0016787">
    <property type="term" value="F:hydrolase activity"/>
    <property type="evidence" value="ECO:0007669"/>
    <property type="project" value="UniProtKB-KW"/>
</dbReference>
<dbReference type="GO" id="GO:0046872">
    <property type="term" value="F:metal ion binding"/>
    <property type="evidence" value="ECO:0007669"/>
    <property type="project" value="UniProtKB-KW"/>
</dbReference>
<dbReference type="GO" id="GO:0005200">
    <property type="term" value="F:structural constituent of cytoskeleton"/>
    <property type="evidence" value="ECO:0007669"/>
    <property type="project" value="InterPro"/>
</dbReference>
<dbReference type="GO" id="GO:0007017">
    <property type="term" value="P:microtubule-based process"/>
    <property type="evidence" value="ECO:0007669"/>
    <property type="project" value="InterPro"/>
</dbReference>
<dbReference type="CDD" id="cd02186">
    <property type="entry name" value="alpha_tubulin"/>
    <property type="match status" value="1"/>
</dbReference>
<dbReference type="FunFam" id="1.10.287.600:FF:000005">
    <property type="entry name" value="Tubulin alpha chain"/>
    <property type="match status" value="1"/>
</dbReference>
<dbReference type="FunFam" id="3.30.1330.20:FF:000001">
    <property type="entry name" value="Tubulin alpha chain"/>
    <property type="match status" value="1"/>
</dbReference>
<dbReference type="FunFam" id="3.40.50.1440:FF:000002">
    <property type="entry name" value="Tubulin alpha chain"/>
    <property type="match status" value="1"/>
</dbReference>
<dbReference type="Gene3D" id="1.10.287.600">
    <property type="entry name" value="Helix hairpin bin"/>
    <property type="match status" value="1"/>
</dbReference>
<dbReference type="Gene3D" id="3.30.1330.20">
    <property type="entry name" value="Tubulin/FtsZ, C-terminal domain"/>
    <property type="match status" value="1"/>
</dbReference>
<dbReference type="Gene3D" id="3.40.50.1440">
    <property type="entry name" value="Tubulin/FtsZ, GTPase domain"/>
    <property type="match status" value="1"/>
</dbReference>
<dbReference type="InterPro" id="IPR002452">
    <property type="entry name" value="Alpha_tubulin"/>
</dbReference>
<dbReference type="InterPro" id="IPR008280">
    <property type="entry name" value="Tub_FtsZ_C"/>
</dbReference>
<dbReference type="InterPro" id="IPR000217">
    <property type="entry name" value="Tubulin"/>
</dbReference>
<dbReference type="InterPro" id="IPR037103">
    <property type="entry name" value="Tubulin/FtsZ-like_C"/>
</dbReference>
<dbReference type="InterPro" id="IPR018316">
    <property type="entry name" value="Tubulin/FtsZ_2-layer-sand-dom"/>
</dbReference>
<dbReference type="InterPro" id="IPR036525">
    <property type="entry name" value="Tubulin/FtsZ_GTPase_sf"/>
</dbReference>
<dbReference type="InterPro" id="IPR023123">
    <property type="entry name" value="Tubulin_C"/>
</dbReference>
<dbReference type="InterPro" id="IPR017975">
    <property type="entry name" value="Tubulin_CS"/>
</dbReference>
<dbReference type="InterPro" id="IPR003008">
    <property type="entry name" value="Tubulin_FtsZ_GTPase"/>
</dbReference>
<dbReference type="PANTHER" id="PTHR11588">
    <property type="entry name" value="TUBULIN"/>
    <property type="match status" value="1"/>
</dbReference>
<dbReference type="Pfam" id="PF00091">
    <property type="entry name" value="Tubulin"/>
    <property type="match status" value="1"/>
</dbReference>
<dbReference type="Pfam" id="PF03953">
    <property type="entry name" value="Tubulin_C"/>
    <property type="match status" value="1"/>
</dbReference>
<dbReference type="PRINTS" id="PR01162">
    <property type="entry name" value="ALPHATUBULIN"/>
</dbReference>
<dbReference type="PRINTS" id="PR01161">
    <property type="entry name" value="TUBULIN"/>
</dbReference>
<dbReference type="SMART" id="SM00864">
    <property type="entry name" value="Tubulin"/>
    <property type="match status" value="1"/>
</dbReference>
<dbReference type="SMART" id="SM00865">
    <property type="entry name" value="Tubulin_C"/>
    <property type="match status" value="1"/>
</dbReference>
<dbReference type="SUPFAM" id="SSF55307">
    <property type="entry name" value="Tubulin C-terminal domain-like"/>
    <property type="match status" value="1"/>
</dbReference>
<dbReference type="SUPFAM" id="SSF52490">
    <property type="entry name" value="Tubulin nucleotide-binding domain-like"/>
    <property type="match status" value="1"/>
</dbReference>
<dbReference type="PROSITE" id="PS00227">
    <property type="entry name" value="TUBULIN"/>
    <property type="match status" value="1"/>
</dbReference>
<name>TBA1_PARLI</name>
<sequence length="452" mass="50209">MRECISIHVGQAGVQMGNACWELYCLEHGIQPDGQMPSDKTIGGGDDSFNTFFSETGAGKHVPRAVFVDLEPTVVDEVRTGTYRQLFHPEQLITGKEDAANNYARGHYTVGKELIDIVLDRIRKLADQCTGLQGFLIFHSFGGGTGSGFSSLLMERLSVDYGKKSKLEFAVYPAPQISTAVVEPYNSILTTHTTLEHSDCAFMVDNEAIYDICRRNLDIERPTYTNLNRLIGQIVSSITASLRFDGALNVDLTEFQTNLVPYPRIHFPLATYAPVISAEKAYHEQLTVSEITNACFEPANQMVKCDPRHGKYMACCLLYRGDVVPKDVNAAIATIKTKRTIQFVDWCPTGFKVGINYQPPTVVPGGDLAKVQRAVCMLSNTTAIAEAWARLDHKFDLMYAKRAFVHWYVGEGMEEGEFSEAREDLAALEKDYEEVGVDSADAEGEEEEGDEY</sequence>
<reference key="1">
    <citation type="journal article" date="1990" name="Nucleic Acids Res.">
        <title>Sequence and expression of Paracentrotus lividus alpha tubulin gene.</title>
        <authorList>
            <person name="Giancuzza F."/>
            <person name="di Bernardo M.G."/>
            <person name="Fais M."/>
            <person name="Palla F."/>
            <person name="Casano C."/>
            <person name="Russo R."/>
            <person name="Spinelli G."/>
        </authorList>
    </citation>
    <scope>NUCLEOTIDE SEQUENCE [MRNA]</scope>
    <source>
        <tissue>Morula</tissue>
    </source>
</reference>
<organism>
    <name type="scientific">Paracentrotus lividus</name>
    <name type="common">Common sea urchin</name>
    <dbReference type="NCBI Taxonomy" id="7656"/>
    <lineage>
        <taxon>Eukaryota</taxon>
        <taxon>Metazoa</taxon>
        <taxon>Echinodermata</taxon>
        <taxon>Eleutherozoa</taxon>
        <taxon>Echinozoa</taxon>
        <taxon>Echinoidea</taxon>
        <taxon>Euechinoidea</taxon>
        <taxon>Echinacea</taxon>
        <taxon>Camarodonta</taxon>
        <taxon>Echinidea</taxon>
        <taxon>Echinidae</taxon>
        <taxon>Paracentrotus</taxon>
    </lineage>
</organism>
<accession>P18258</accession>
<proteinExistence type="evidence at transcript level"/>
<feature type="chain" id="PRO_0000048208" description="Tubulin alpha-1 chain">
    <location>
        <begin position="1"/>
        <end position="452"/>
    </location>
</feature>
<feature type="region of interest" description="Disordered" evidence="3">
    <location>
        <begin position="433"/>
        <end position="452"/>
    </location>
</feature>
<feature type="active site" evidence="2">
    <location>
        <position position="254"/>
    </location>
</feature>
<feature type="binding site" evidence="2">
    <location>
        <position position="11"/>
    </location>
    <ligand>
        <name>GTP</name>
        <dbReference type="ChEBI" id="CHEBI:37565"/>
    </ligand>
</feature>
<feature type="binding site" evidence="2">
    <location>
        <position position="71"/>
    </location>
    <ligand>
        <name>GTP</name>
        <dbReference type="ChEBI" id="CHEBI:37565"/>
    </ligand>
</feature>
<feature type="binding site" evidence="2">
    <location>
        <position position="71"/>
    </location>
    <ligand>
        <name>Mg(2+)</name>
        <dbReference type="ChEBI" id="CHEBI:18420"/>
    </ligand>
</feature>
<feature type="binding site" evidence="2">
    <location>
        <position position="140"/>
    </location>
    <ligand>
        <name>GTP</name>
        <dbReference type="ChEBI" id="CHEBI:37565"/>
    </ligand>
</feature>
<feature type="binding site" evidence="2">
    <location>
        <position position="144"/>
    </location>
    <ligand>
        <name>GTP</name>
        <dbReference type="ChEBI" id="CHEBI:37565"/>
    </ligand>
</feature>
<feature type="binding site" evidence="2">
    <location>
        <position position="145"/>
    </location>
    <ligand>
        <name>GTP</name>
        <dbReference type="ChEBI" id="CHEBI:37565"/>
    </ligand>
</feature>
<feature type="binding site" evidence="2">
    <location>
        <position position="179"/>
    </location>
    <ligand>
        <name>GTP</name>
        <dbReference type="ChEBI" id="CHEBI:37565"/>
    </ligand>
</feature>
<feature type="binding site" evidence="2">
    <location>
        <position position="206"/>
    </location>
    <ligand>
        <name>GTP</name>
        <dbReference type="ChEBI" id="CHEBI:37565"/>
    </ligand>
</feature>
<feature type="binding site" evidence="2">
    <location>
        <position position="228"/>
    </location>
    <ligand>
        <name>GTP</name>
        <dbReference type="ChEBI" id="CHEBI:37565"/>
    </ligand>
</feature>
<feature type="site" description="Involved in polymerization">
    <location>
        <position position="452"/>
    </location>
</feature>
<feature type="modified residue" description="N6-acetyllysine" evidence="1">
    <location>
        <position position="40"/>
    </location>
</feature>